<name>SYE_MYCGA</name>
<keyword id="KW-0030">Aminoacyl-tRNA synthetase</keyword>
<keyword id="KW-0067">ATP-binding</keyword>
<keyword id="KW-0963">Cytoplasm</keyword>
<keyword id="KW-0436">Ligase</keyword>
<keyword id="KW-0547">Nucleotide-binding</keyword>
<keyword id="KW-0648">Protein biosynthesis</keyword>
<keyword id="KW-1185">Reference proteome</keyword>
<dbReference type="EC" id="6.1.1.17" evidence="1"/>
<dbReference type="EMBL" id="AE015450">
    <property type="protein sequence ID" value="AAP57063.1"/>
    <property type="molecule type" value="Genomic_DNA"/>
</dbReference>
<dbReference type="RefSeq" id="WP_011113976.1">
    <property type="nucleotide sequence ID" value="NC_004829.2"/>
</dbReference>
<dbReference type="SMR" id="Q7NAE5"/>
<dbReference type="KEGG" id="mga:MGA_0594"/>
<dbReference type="PATRIC" id="fig|233150.7.peg.803"/>
<dbReference type="HOGENOM" id="CLU_015768_6_1_14"/>
<dbReference type="OrthoDB" id="9807503at2"/>
<dbReference type="Proteomes" id="UP000001418">
    <property type="component" value="Chromosome"/>
</dbReference>
<dbReference type="GO" id="GO:0005829">
    <property type="term" value="C:cytosol"/>
    <property type="evidence" value="ECO:0007669"/>
    <property type="project" value="TreeGrafter"/>
</dbReference>
<dbReference type="GO" id="GO:0005524">
    <property type="term" value="F:ATP binding"/>
    <property type="evidence" value="ECO:0007669"/>
    <property type="project" value="UniProtKB-UniRule"/>
</dbReference>
<dbReference type="GO" id="GO:0004818">
    <property type="term" value="F:glutamate-tRNA ligase activity"/>
    <property type="evidence" value="ECO:0007669"/>
    <property type="project" value="UniProtKB-UniRule"/>
</dbReference>
<dbReference type="GO" id="GO:0000049">
    <property type="term" value="F:tRNA binding"/>
    <property type="evidence" value="ECO:0007669"/>
    <property type="project" value="InterPro"/>
</dbReference>
<dbReference type="GO" id="GO:0008270">
    <property type="term" value="F:zinc ion binding"/>
    <property type="evidence" value="ECO:0007669"/>
    <property type="project" value="InterPro"/>
</dbReference>
<dbReference type="GO" id="GO:0006424">
    <property type="term" value="P:glutamyl-tRNA aminoacylation"/>
    <property type="evidence" value="ECO:0007669"/>
    <property type="project" value="UniProtKB-UniRule"/>
</dbReference>
<dbReference type="CDD" id="cd00808">
    <property type="entry name" value="GluRS_core"/>
    <property type="match status" value="1"/>
</dbReference>
<dbReference type="FunFam" id="3.40.50.620:FF:000007">
    <property type="entry name" value="Glutamate--tRNA ligase"/>
    <property type="match status" value="1"/>
</dbReference>
<dbReference type="Gene3D" id="1.10.10.350">
    <property type="match status" value="1"/>
</dbReference>
<dbReference type="Gene3D" id="3.40.50.620">
    <property type="entry name" value="HUPs"/>
    <property type="match status" value="1"/>
</dbReference>
<dbReference type="HAMAP" id="MF_00022">
    <property type="entry name" value="Glu_tRNA_synth_type1"/>
    <property type="match status" value="1"/>
</dbReference>
<dbReference type="InterPro" id="IPR045462">
    <property type="entry name" value="aa-tRNA-synth_I_cd-bd"/>
</dbReference>
<dbReference type="InterPro" id="IPR020751">
    <property type="entry name" value="aa-tRNA-synth_I_codon-bd_sub2"/>
</dbReference>
<dbReference type="InterPro" id="IPR001412">
    <property type="entry name" value="aa-tRNA-synth_I_CS"/>
</dbReference>
<dbReference type="InterPro" id="IPR008925">
    <property type="entry name" value="aa_tRNA-synth_I_cd-bd_sf"/>
</dbReference>
<dbReference type="InterPro" id="IPR004527">
    <property type="entry name" value="Glu-tRNA-ligase_bac/mito"/>
</dbReference>
<dbReference type="InterPro" id="IPR000924">
    <property type="entry name" value="Glu/Gln-tRNA-synth"/>
</dbReference>
<dbReference type="InterPro" id="IPR020058">
    <property type="entry name" value="Glu/Gln-tRNA-synth_Ib_cat-dom"/>
</dbReference>
<dbReference type="InterPro" id="IPR049940">
    <property type="entry name" value="GluQ/Sye"/>
</dbReference>
<dbReference type="InterPro" id="IPR033910">
    <property type="entry name" value="GluRS_core"/>
</dbReference>
<dbReference type="InterPro" id="IPR014729">
    <property type="entry name" value="Rossmann-like_a/b/a_fold"/>
</dbReference>
<dbReference type="NCBIfam" id="TIGR00464">
    <property type="entry name" value="gltX_bact"/>
    <property type="match status" value="1"/>
</dbReference>
<dbReference type="PANTHER" id="PTHR43311">
    <property type="entry name" value="GLUTAMATE--TRNA LIGASE"/>
    <property type="match status" value="1"/>
</dbReference>
<dbReference type="PANTHER" id="PTHR43311:SF2">
    <property type="entry name" value="GLUTAMATE--TRNA LIGASE, MITOCHONDRIAL-RELATED"/>
    <property type="match status" value="1"/>
</dbReference>
<dbReference type="Pfam" id="PF19269">
    <property type="entry name" value="Anticodon_2"/>
    <property type="match status" value="1"/>
</dbReference>
<dbReference type="Pfam" id="PF00749">
    <property type="entry name" value="tRNA-synt_1c"/>
    <property type="match status" value="1"/>
</dbReference>
<dbReference type="PRINTS" id="PR00987">
    <property type="entry name" value="TRNASYNTHGLU"/>
</dbReference>
<dbReference type="SUPFAM" id="SSF48163">
    <property type="entry name" value="An anticodon-binding domain of class I aminoacyl-tRNA synthetases"/>
    <property type="match status" value="1"/>
</dbReference>
<dbReference type="SUPFAM" id="SSF52374">
    <property type="entry name" value="Nucleotidylyl transferase"/>
    <property type="match status" value="1"/>
</dbReference>
<dbReference type="PROSITE" id="PS00178">
    <property type="entry name" value="AA_TRNA_LIGASE_I"/>
    <property type="match status" value="1"/>
</dbReference>
<gene>
    <name evidence="1" type="primary">gltX</name>
    <name type="ordered locus">MYCGA7130</name>
    <name type="ORF">MGA_0594</name>
</gene>
<sequence length="498" mass="57981">MSKIRTRYAPSPTGYFHIGGARTALFNYLFAKHNNGEFIVRIEDTDIERNVEDGAENQLYNLKWLNIFADESIWNPTQSGPYRQSEKLEVYQKYAYQLLEEKKAYRCFCTPEELQKHREDLLKQYKPPIYSRKCFLLSEEQIHKNLADKIPFTIRLLLRDNKEYSWNDLIRGNLIFNTSSMSDPVILKSNQIATYNFAVVIDDHDMKISHILRGEEHISNTPYQLAIKEALGFKDEFVYGHLSIIVDETGKKLSKRNLAVEQFVEGFRKKGYLAEALVNFIALLGWSHPDNIEILDLPTLVKSFTIKNLSAAPSFFDIKKLNWISSEYIKNMDDVMYLAFIKPYVDLNEYDEIKTKVNEICLMFKNQLQYGYQINEIIKESFVPHVGLSNLDQADLDFLKSNPNYRQLLISFKEKINQLDQVNDHNVKEIINWLAHQIKLGDLVLEKPLGGKNLYMPLRIVLSNKKHGPELNKVIALYDKQTILKNLDDAINYLTNAK</sequence>
<comment type="function">
    <text evidence="1">Catalyzes the attachment of glutamate to tRNA(Glu) in a two-step reaction: glutamate is first activated by ATP to form Glu-AMP and then transferred to the acceptor end of tRNA(Glu).</text>
</comment>
<comment type="catalytic activity">
    <reaction evidence="1">
        <text>tRNA(Glu) + L-glutamate + ATP = L-glutamyl-tRNA(Glu) + AMP + diphosphate</text>
        <dbReference type="Rhea" id="RHEA:23540"/>
        <dbReference type="Rhea" id="RHEA-COMP:9663"/>
        <dbReference type="Rhea" id="RHEA-COMP:9680"/>
        <dbReference type="ChEBI" id="CHEBI:29985"/>
        <dbReference type="ChEBI" id="CHEBI:30616"/>
        <dbReference type="ChEBI" id="CHEBI:33019"/>
        <dbReference type="ChEBI" id="CHEBI:78442"/>
        <dbReference type="ChEBI" id="CHEBI:78520"/>
        <dbReference type="ChEBI" id="CHEBI:456215"/>
        <dbReference type="EC" id="6.1.1.17"/>
    </reaction>
</comment>
<comment type="subunit">
    <text evidence="1">Monomer.</text>
</comment>
<comment type="subcellular location">
    <subcellularLocation>
        <location evidence="1">Cytoplasm</location>
    </subcellularLocation>
</comment>
<comment type="similarity">
    <text evidence="1">Belongs to the class-I aminoacyl-tRNA synthetase family. Glutamate--tRNA ligase type 1 subfamily.</text>
</comment>
<proteinExistence type="inferred from homology"/>
<protein>
    <recommendedName>
        <fullName evidence="1">Glutamate--tRNA ligase</fullName>
        <ecNumber evidence="1">6.1.1.17</ecNumber>
    </recommendedName>
    <alternativeName>
        <fullName evidence="1">Glutamyl-tRNA synthetase</fullName>
        <shortName evidence="1">GluRS</shortName>
    </alternativeName>
</protein>
<evidence type="ECO:0000255" key="1">
    <source>
        <dbReference type="HAMAP-Rule" id="MF_00022"/>
    </source>
</evidence>
<accession>Q7NAE5</accession>
<feature type="chain" id="PRO_0000119600" description="Glutamate--tRNA ligase">
    <location>
        <begin position="1"/>
        <end position="498"/>
    </location>
</feature>
<feature type="short sequence motif" description="'HIGH' region" evidence="1">
    <location>
        <begin position="10"/>
        <end position="20"/>
    </location>
</feature>
<feature type="short sequence motif" description="'KMSKS' region" evidence="1">
    <location>
        <begin position="252"/>
        <end position="256"/>
    </location>
</feature>
<feature type="binding site" evidence="1">
    <location>
        <position position="255"/>
    </location>
    <ligand>
        <name>ATP</name>
        <dbReference type="ChEBI" id="CHEBI:30616"/>
    </ligand>
</feature>
<reference key="1">
    <citation type="journal article" date="2003" name="Microbiology">
        <title>The complete genome sequence of the avian pathogen Mycoplasma gallisepticum strain R(low).</title>
        <authorList>
            <person name="Papazisi L."/>
            <person name="Gorton T.S."/>
            <person name="Kutish G."/>
            <person name="Markham P.F."/>
            <person name="Browning G.F."/>
            <person name="Nguyen D.K."/>
            <person name="Swartzell S."/>
            <person name="Madan A."/>
            <person name="Mahairas G."/>
            <person name="Geary S.J."/>
        </authorList>
    </citation>
    <scope>NUCLEOTIDE SEQUENCE [LARGE SCALE GENOMIC DNA]</scope>
    <source>
        <strain>R(low / passage 15 / clone 2)</strain>
    </source>
</reference>
<organism>
    <name type="scientific">Mycoplasmoides gallisepticum (strain R(low / passage 15 / clone 2))</name>
    <name type="common">Mycoplasma gallisepticum</name>
    <dbReference type="NCBI Taxonomy" id="710127"/>
    <lineage>
        <taxon>Bacteria</taxon>
        <taxon>Bacillati</taxon>
        <taxon>Mycoplasmatota</taxon>
        <taxon>Mycoplasmoidales</taxon>
        <taxon>Mycoplasmoidaceae</taxon>
        <taxon>Mycoplasmoides</taxon>
    </lineage>
</organism>